<reference key="1">
    <citation type="journal article" date="2007" name="Proc. Natl. Acad. Sci. U.S.A.">
        <title>Genome and proteome of long-chain alkane degrading Geobacillus thermodenitrificans NG80-2 isolated from a deep-subsurface oil reservoir.</title>
        <authorList>
            <person name="Feng L."/>
            <person name="Wang W."/>
            <person name="Cheng J."/>
            <person name="Ren Y."/>
            <person name="Zhao G."/>
            <person name="Gao C."/>
            <person name="Tang Y."/>
            <person name="Liu X."/>
            <person name="Han W."/>
            <person name="Peng X."/>
            <person name="Liu R."/>
            <person name="Wang L."/>
        </authorList>
    </citation>
    <scope>NUCLEOTIDE SEQUENCE [LARGE SCALE GENOMIC DNA]</scope>
    <source>
        <strain>NG80-2</strain>
    </source>
</reference>
<gene>
    <name evidence="1" type="primary">rplV</name>
    <name type="ordered locus">GTNG_0111</name>
</gene>
<comment type="function">
    <text evidence="1">This protein binds specifically to 23S rRNA; its binding is stimulated by other ribosomal proteins, e.g. L4, L17, and L20. It is important during the early stages of 50S assembly. It makes multiple contacts with different domains of the 23S rRNA in the assembled 50S subunit and ribosome (By similarity).</text>
</comment>
<comment type="function">
    <text evidence="1">The globular domain of the protein is located near the polypeptide exit tunnel on the outside of the subunit, while an extended beta-hairpin is found that lines the wall of the exit tunnel in the center of the 70S ribosome.</text>
</comment>
<comment type="subunit">
    <text evidence="1">Part of the 50S ribosomal subunit.</text>
</comment>
<comment type="similarity">
    <text evidence="1">Belongs to the universal ribosomal protein uL22 family.</text>
</comment>
<keyword id="KW-0687">Ribonucleoprotein</keyword>
<keyword id="KW-0689">Ribosomal protein</keyword>
<keyword id="KW-0694">RNA-binding</keyword>
<keyword id="KW-0699">rRNA-binding</keyword>
<protein>
    <recommendedName>
        <fullName evidence="1">Large ribosomal subunit protein uL22</fullName>
    </recommendedName>
    <alternativeName>
        <fullName evidence="2">50S ribosomal protein L22</fullName>
    </alternativeName>
</protein>
<evidence type="ECO:0000255" key="1">
    <source>
        <dbReference type="HAMAP-Rule" id="MF_01331"/>
    </source>
</evidence>
<evidence type="ECO:0000305" key="2"/>
<feature type="chain" id="PRO_1000052576" description="Large ribosomal subunit protein uL22">
    <location>
        <begin position="1"/>
        <end position="113"/>
    </location>
</feature>
<name>RL22_GEOTN</name>
<organism>
    <name type="scientific">Geobacillus thermodenitrificans (strain NG80-2)</name>
    <dbReference type="NCBI Taxonomy" id="420246"/>
    <lineage>
        <taxon>Bacteria</taxon>
        <taxon>Bacillati</taxon>
        <taxon>Bacillota</taxon>
        <taxon>Bacilli</taxon>
        <taxon>Bacillales</taxon>
        <taxon>Anoxybacillaceae</taxon>
        <taxon>Geobacillus</taxon>
    </lineage>
</organism>
<accession>A4IJJ4</accession>
<proteinExistence type="inferred from homology"/>
<sequence>MQAKAVARTVRIAPRKARLVIDLIRGKKVGEAFAILRHTPKAASPIIEKVLKSAVANAEHNYDMDINNLVVSQAYVNEGPTLKRFRPRARGQASAINKRTSHITIVVSEKKEG</sequence>
<dbReference type="EMBL" id="CP000557">
    <property type="protein sequence ID" value="ABO65498.1"/>
    <property type="molecule type" value="Genomic_DNA"/>
</dbReference>
<dbReference type="RefSeq" id="WP_008881939.1">
    <property type="nucleotide sequence ID" value="NC_009328.1"/>
</dbReference>
<dbReference type="SMR" id="A4IJJ4"/>
<dbReference type="GeneID" id="87622321"/>
<dbReference type="KEGG" id="gtn:GTNG_0111"/>
<dbReference type="eggNOG" id="COG0091">
    <property type="taxonomic scope" value="Bacteria"/>
</dbReference>
<dbReference type="HOGENOM" id="CLU_083987_3_3_9"/>
<dbReference type="Proteomes" id="UP000001578">
    <property type="component" value="Chromosome"/>
</dbReference>
<dbReference type="GO" id="GO:0022625">
    <property type="term" value="C:cytosolic large ribosomal subunit"/>
    <property type="evidence" value="ECO:0007669"/>
    <property type="project" value="TreeGrafter"/>
</dbReference>
<dbReference type="GO" id="GO:0019843">
    <property type="term" value="F:rRNA binding"/>
    <property type="evidence" value="ECO:0007669"/>
    <property type="project" value="UniProtKB-UniRule"/>
</dbReference>
<dbReference type="GO" id="GO:0003735">
    <property type="term" value="F:structural constituent of ribosome"/>
    <property type="evidence" value="ECO:0007669"/>
    <property type="project" value="InterPro"/>
</dbReference>
<dbReference type="GO" id="GO:0006412">
    <property type="term" value="P:translation"/>
    <property type="evidence" value="ECO:0007669"/>
    <property type="project" value="UniProtKB-UniRule"/>
</dbReference>
<dbReference type="CDD" id="cd00336">
    <property type="entry name" value="Ribosomal_L22"/>
    <property type="match status" value="1"/>
</dbReference>
<dbReference type="FunFam" id="3.90.470.10:FF:000001">
    <property type="entry name" value="50S ribosomal protein L22"/>
    <property type="match status" value="1"/>
</dbReference>
<dbReference type="Gene3D" id="3.90.470.10">
    <property type="entry name" value="Ribosomal protein L22/L17"/>
    <property type="match status" value="1"/>
</dbReference>
<dbReference type="HAMAP" id="MF_01331_B">
    <property type="entry name" value="Ribosomal_uL22_B"/>
    <property type="match status" value="1"/>
</dbReference>
<dbReference type="InterPro" id="IPR001063">
    <property type="entry name" value="Ribosomal_uL22"/>
</dbReference>
<dbReference type="InterPro" id="IPR005727">
    <property type="entry name" value="Ribosomal_uL22_bac/chlpt-type"/>
</dbReference>
<dbReference type="InterPro" id="IPR047867">
    <property type="entry name" value="Ribosomal_uL22_bac/org-type"/>
</dbReference>
<dbReference type="InterPro" id="IPR018260">
    <property type="entry name" value="Ribosomal_uL22_CS"/>
</dbReference>
<dbReference type="InterPro" id="IPR036394">
    <property type="entry name" value="Ribosomal_uL22_sf"/>
</dbReference>
<dbReference type="NCBIfam" id="TIGR01044">
    <property type="entry name" value="rplV_bact"/>
    <property type="match status" value="1"/>
</dbReference>
<dbReference type="PANTHER" id="PTHR13501">
    <property type="entry name" value="CHLOROPLAST 50S RIBOSOMAL PROTEIN L22-RELATED"/>
    <property type="match status" value="1"/>
</dbReference>
<dbReference type="PANTHER" id="PTHR13501:SF8">
    <property type="entry name" value="LARGE RIBOSOMAL SUBUNIT PROTEIN UL22M"/>
    <property type="match status" value="1"/>
</dbReference>
<dbReference type="Pfam" id="PF00237">
    <property type="entry name" value="Ribosomal_L22"/>
    <property type="match status" value="1"/>
</dbReference>
<dbReference type="SUPFAM" id="SSF54843">
    <property type="entry name" value="Ribosomal protein L22"/>
    <property type="match status" value="1"/>
</dbReference>
<dbReference type="PROSITE" id="PS00464">
    <property type="entry name" value="RIBOSOMAL_L22"/>
    <property type="match status" value="1"/>
</dbReference>